<organism>
    <name type="scientific">Escherichia coli O45:K1 (strain S88 / ExPEC)</name>
    <dbReference type="NCBI Taxonomy" id="585035"/>
    <lineage>
        <taxon>Bacteria</taxon>
        <taxon>Pseudomonadati</taxon>
        <taxon>Pseudomonadota</taxon>
        <taxon>Gammaproteobacteria</taxon>
        <taxon>Enterobacterales</taxon>
        <taxon>Enterobacteriaceae</taxon>
        <taxon>Escherichia</taxon>
    </lineage>
</organism>
<feature type="chain" id="PRO_1000126904" description="Large ribosomal subunit protein bL9">
    <location>
        <begin position="1"/>
        <end position="149"/>
    </location>
</feature>
<feature type="modified residue" description="N6-acetyllysine" evidence="1">
    <location>
        <position position="89"/>
    </location>
</feature>
<reference key="1">
    <citation type="journal article" date="2009" name="PLoS Genet.">
        <title>Organised genome dynamics in the Escherichia coli species results in highly diverse adaptive paths.</title>
        <authorList>
            <person name="Touchon M."/>
            <person name="Hoede C."/>
            <person name="Tenaillon O."/>
            <person name="Barbe V."/>
            <person name="Baeriswyl S."/>
            <person name="Bidet P."/>
            <person name="Bingen E."/>
            <person name="Bonacorsi S."/>
            <person name="Bouchier C."/>
            <person name="Bouvet O."/>
            <person name="Calteau A."/>
            <person name="Chiapello H."/>
            <person name="Clermont O."/>
            <person name="Cruveiller S."/>
            <person name="Danchin A."/>
            <person name="Diard M."/>
            <person name="Dossat C."/>
            <person name="Karoui M.E."/>
            <person name="Frapy E."/>
            <person name="Garry L."/>
            <person name="Ghigo J.M."/>
            <person name="Gilles A.M."/>
            <person name="Johnson J."/>
            <person name="Le Bouguenec C."/>
            <person name="Lescat M."/>
            <person name="Mangenot S."/>
            <person name="Martinez-Jehanne V."/>
            <person name="Matic I."/>
            <person name="Nassif X."/>
            <person name="Oztas S."/>
            <person name="Petit M.A."/>
            <person name="Pichon C."/>
            <person name="Rouy Z."/>
            <person name="Ruf C.S."/>
            <person name="Schneider D."/>
            <person name="Tourret J."/>
            <person name="Vacherie B."/>
            <person name="Vallenet D."/>
            <person name="Medigue C."/>
            <person name="Rocha E.P.C."/>
            <person name="Denamur E."/>
        </authorList>
    </citation>
    <scope>NUCLEOTIDE SEQUENCE [LARGE SCALE GENOMIC DNA]</scope>
    <source>
        <strain>S88 / ExPEC</strain>
    </source>
</reference>
<sequence>MQVILLDKVANLGSLGDQVNVKAGYARNFLVPQGKAVPATKKNIEFFEARRAELEAKLAEVLAAANARAEKINALETVTIASKAGDEGKLFGSIGTRDIADAVTAAGVEVAKSEVRLPNGVLRTTGEHEVSFQVHSEVFAKVIVNVVAE</sequence>
<protein>
    <recommendedName>
        <fullName evidence="1">Large ribosomal subunit protein bL9</fullName>
    </recommendedName>
    <alternativeName>
        <fullName evidence="2">50S ribosomal protein L9</fullName>
    </alternativeName>
</protein>
<accession>B7MLK8</accession>
<gene>
    <name evidence="1" type="primary">rplI</name>
    <name type="ordered locus">ECS88_4789</name>
</gene>
<keyword id="KW-0007">Acetylation</keyword>
<keyword id="KW-1185">Reference proteome</keyword>
<keyword id="KW-0687">Ribonucleoprotein</keyword>
<keyword id="KW-0689">Ribosomal protein</keyword>
<keyword id="KW-0694">RNA-binding</keyword>
<keyword id="KW-0699">rRNA-binding</keyword>
<name>RL9_ECO45</name>
<dbReference type="EMBL" id="CU928161">
    <property type="protein sequence ID" value="CAR05938.1"/>
    <property type="molecule type" value="Genomic_DNA"/>
</dbReference>
<dbReference type="RefSeq" id="WP_001196062.1">
    <property type="nucleotide sequence ID" value="NC_011742.1"/>
</dbReference>
<dbReference type="EMDB" id="EMD-7970"/>
<dbReference type="EMDB" id="EMD-8826"/>
<dbReference type="EMDB" id="EMD-8829"/>
<dbReference type="SMR" id="B7MLK8"/>
<dbReference type="IntAct" id="B7MLK8">
    <property type="interactions" value="1"/>
</dbReference>
<dbReference type="GeneID" id="93777620"/>
<dbReference type="KEGG" id="ecz:ECS88_4789"/>
<dbReference type="HOGENOM" id="CLU_078938_4_1_6"/>
<dbReference type="Proteomes" id="UP000000747">
    <property type="component" value="Chromosome"/>
</dbReference>
<dbReference type="GO" id="GO:1990904">
    <property type="term" value="C:ribonucleoprotein complex"/>
    <property type="evidence" value="ECO:0007669"/>
    <property type="project" value="UniProtKB-KW"/>
</dbReference>
<dbReference type="GO" id="GO:0005840">
    <property type="term" value="C:ribosome"/>
    <property type="evidence" value="ECO:0007669"/>
    <property type="project" value="UniProtKB-KW"/>
</dbReference>
<dbReference type="GO" id="GO:0019843">
    <property type="term" value="F:rRNA binding"/>
    <property type="evidence" value="ECO:0007669"/>
    <property type="project" value="UniProtKB-UniRule"/>
</dbReference>
<dbReference type="GO" id="GO:0003735">
    <property type="term" value="F:structural constituent of ribosome"/>
    <property type="evidence" value="ECO:0007669"/>
    <property type="project" value="InterPro"/>
</dbReference>
<dbReference type="GO" id="GO:0006412">
    <property type="term" value="P:translation"/>
    <property type="evidence" value="ECO:0007669"/>
    <property type="project" value="UniProtKB-UniRule"/>
</dbReference>
<dbReference type="FunFam" id="3.10.430.100:FF:000001">
    <property type="entry name" value="50S ribosomal protein L9"/>
    <property type="match status" value="1"/>
</dbReference>
<dbReference type="FunFam" id="3.40.5.10:FF:000001">
    <property type="entry name" value="50S ribosomal protein L9"/>
    <property type="match status" value="1"/>
</dbReference>
<dbReference type="Gene3D" id="3.10.430.100">
    <property type="entry name" value="Ribosomal protein L9, C-terminal domain"/>
    <property type="match status" value="1"/>
</dbReference>
<dbReference type="Gene3D" id="3.40.5.10">
    <property type="entry name" value="Ribosomal protein L9, N-terminal domain"/>
    <property type="match status" value="1"/>
</dbReference>
<dbReference type="HAMAP" id="MF_00503">
    <property type="entry name" value="Ribosomal_bL9"/>
    <property type="match status" value="1"/>
</dbReference>
<dbReference type="InterPro" id="IPR000244">
    <property type="entry name" value="Ribosomal_bL9"/>
</dbReference>
<dbReference type="InterPro" id="IPR009027">
    <property type="entry name" value="Ribosomal_bL9/RNase_H1_N"/>
</dbReference>
<dbReference type="InterPro" id="IPR020594">
    <property type="entry name" value="Ribosomal_bL9_bac/chp"/>
</dbReference>
<dbReference type="InterPro" id="IPR020069">
    <property type="entry name" value="Ribosomal_bL9_C"/>
</dbReference>
<dbReference type="InterPro" id="IPR036791">
    <property type="entry name" value="Ribosomal_bL9_C_sf"/>
</dbReference>
<dbReference type="InterPro" id="IPR020070">
    <property type="entry name" value="Ribosomal_bL9_N"/>
</dbReference>
<dbReference type="InterPro" id="IPR036935">
    <property type="entry name" value="Ribosomal_bL9_N_sf"/>
</dbReference>
<dbReference type="NCBIfam" id="TIGR00158">
    <property type="entry name" value="L9"/>
    <property type="match status" value="1"/>
</dbReference>
<dbReference type="PANTHER" id="PTHR21368">
    <property type="entry name" value="50S RIBOSOMAL PROTEIN L9"/>
    <property type="match status" value="1"/>
</dbReference>
<dbReference type="Pfam" id="PF03948">
    <property type="entry name" value="Ribosomal_L9_C"/>
    <property type="match status" value="1"/>
</dbReference>
<dbReference type="Pfam" id="PF01281">
    <property type="entry name" value="Ribosomal_L9_N"/>
    <property type="match status" value="1"/>
</dbReference>
<dbReference type="SUPFAM" id="SSF55658">
    <property type="entry name" value="L9 N-domain-like"/>
    <property type="match status" value="1"/>
</dbReference>
<dbReference type="SUPFAM" id="SSF55653">
    <property type="entry name" value="Ribosomal protein L9 C-domain"/>
    <property type="match status" value="1"/>
</dbReference>
<dbReference type="PROSITE" id="PS00651">
    <property type="entry name" value="RIBOSOMAL_L9"/>
    <property type="match status" value="1"/>
</dbReference>
<evidence type="ECO:0000255" key="1">
    <source>
        <dbReference type="HAMAP-Rule" id="MF_00503"/>
    </source>
</evidence>
<evidence type="ECO:0000305" key="2"/>
<proteinExistence type="inferred from homology"/>
<comment type="function">
    <text evidence="1">Binds to the 23S rRNA.</text>
</comment>
<comment type="similarity">
    <text evidence="1">Belongs to the bacterial ribosomal protein bL9 family.</text>
</comment>